<proteinExistence type="inferred from homology"/>
<dbReference type="EMBL" id="AY151819">
    <property type="protein sequence ID" value="AAO06063.1"/>
    <property type="molecule type" value="Genomic_DNA"/>
</dbReference>
<dbReference type="RefSeq" id="WP_011835356.1">
    <property type="nucleotide sequence ID" value="NZ_WJUX01000053.1"/>
</dbReference>
<dbReference type="SMR" id="Q8GDC4"/>
<dbReference type="OMA" id="HEQRKAG"/>
<dbReference type="GO" id="GO:0005737">
    <property type="term" value="C:cytoplasm"/>
    <property type="evidence" value="ECO:0007669"/>
    <property type="project" value="UniProtKB-SubCell"/>
</dbReference>
<dbReference type="GO" id="GO:0003677">
    <property type="term" value="F:DNA binding"/>
    <property type="evidence" value="ECO:0007669"/>
    <property type="project" value="UniProtKB-UniRule"/>
</dbReference>
<dbReference type="GO" id="GO:0003700">
    <property type="term" value="F:DNA-binding transcription factor activity"/>
    <property type="evidence" value="ECO:0007669"/>
    <property type="project" value="UniProtKB-UniRule"/>
</dbReference>
<dbReference type="GO" id="GO:0045892">
    <property type="term" value="P:negative regulation of DNA-templated transcription"/>
    <property type="evidence" value="ECO:0007669"/>
    <property type="project" value="InterPro"/>
</dbReference>
<dbReference type="GO" id="GO:0051775">
    <property type="term" value="P:response to redox state"/>
    <property type="evidence" value="ECO:0007669"/>
    <property type="project" value="InterPro"/>
</dbReference>
<dbReference type="Gene3D" id="3.40.50.720">
    <property type="entry name" value="NAD(P)-binding Rossmann-like Domain"/>
    <property type="match status" value="1"/>
</dbReference>
<dbReference type="Gene3D" id="1.10.10.10">
    <property type="entry name" value="Winged helix-like DNA-binding domain superfamily/Winged helix DNA-binding domain"/>
    <property type="match status" value="1"/>
</dbReference>
<dbReference type="HAMAP" id="MF_01131">
    <property type="entry name" value="Rex"/>
    <property type="match status" value="1"/>
</dbReference>
<dbReference type="InterPro" id="IPR003781">
    <property type="entry name" value="CoA-bd"/>
</dbReference>
<dbReference type="InterPro" id="IPR036291">
    <property type="entry name" value="NAD(P)-bd_dom_sf"/>
</dbReference>
<dbReference type="InterPro" id="IPR009718">
    <property type="entry name" value="Rex_DNA-bd_C_dom"/>
</dbReference>
<dbReference type="InterPro" id="IPR022876">
    <property type="entry name" value="Tscrpt_rep_Rex"/>
</dbReference>
<dbReference type="InterPro" id="IPR036388">
    <property type="entry name" value="WH-like_DNA-bd_sf"/>
</dbReference>
<dbReference type="InterPro" id="IPR036390">
    <property type="entry name" value="WH_DNA-bd_sf"/>
</dbReference>
<dbReference type="NCBIfam" id="NF003989">
    <property type="entry name" value="PRK05472.1-3"/>
    <property type="match status" value="1"/>
</dbReference>
<dbReference type="NCBIfam" id="NF003991">
    <property type="entry name" value="PRK05472.1-5"/>
    <property type="match status" value="1"/>
</dbReference>
<dbReference type="NCBIfam" id="NF003994">
    <property type="entry name" value="PRK05472.2-3"/>
    <property type="match status" value="1"/>
</dbReference>
<dbReference type="NCBIfam" id="NF003995">
    <property type="entry name" value="PRK05472.2-4"/>
    <property type="match status" value="1"/>
</dbReference>
<dbReference type="NCBIfam" id="NF003996">
    <property type="entry name" value="PRK05472.2-5"/>
    <property type="match status" value="1"/>
</dbReference>
<dbReference type="PANTHER" id="PTHR35786">
    <property type="entry name" value="REDOX-SENSING TRANSCRIPTIONAL REPRESSOR REX"/>
    <property type="match status" value="1"/>
</dbReference>
<dbReference type="PANTHER" id="PTHR35786:SF1">
    <property type="entry name" value="REDOX-SENSING TRANSCRIPTIONAL REPRESSOR REX 1"/>
    <property type="match status" value="1"/>
</dbReference>
<dbReference type="Pfam" id="PF02629">
    <property type="entry name" value="CoA_binding"/>
    <property type="match status" value="1"/>
</dbReference>
<dbReference type="Pfam" id="PF06971">
    <property type="entry name" value="Put_DNA-bind_N"/>
    <property type="match status" value="1"/>
</dbReference>
<dbReference type="SMART" id="SM00881">
    <property type="entry name" value="CoA_binding"/>
    <property type="match status" value="1"/>
</dbReference>
<dbReference type="SUPFAM" id="SSF51735">
    <property type="entry name" value="NAD(P)-binding Rossmann-fold domains"/>
    <property type="match status" value="1"/>
</dbReference>
<dbReference type="SUPFAM" id="SSF46785">
    <property type="entry name" value="Winged helix' DNA-binding domain"/>
    <property type="match status" value="1"/>
</dbReference>
<protein>
    <recommendedName>
        <fullName evidence="1">Redox-sensing transcriptional repressor Rex</fullName>
    </recommendedName>
</protein>
<gene>
    <name evidence="1" type="primary">rex</name>
</gene>
<reference key="1">
    <citation type="journal article" date="2003" name="Appl. Environ. Microbiol.">
        <title>Use of real-time quantitative PCR for the analysis of phiLC3 prophage stability in lactococci.</title>
        <authorList>
            <person name="Lunde M."/>
            <person name="Blatny J.M."/>
            <person name="Lillehaug D."/>
            <person name="Aastveit A.H."/>
            <person name="Nes I.F."/>
        </authorList>
    </citation>
    <scope>NUCLEOTIDE SEQUENCE [GENOMIC DNA]</scope>
    <source>
        <strain>IMN-C18</strain>
    </source>
</reference>
<sequence length="216" mass="24307">MTDHKPSKSLPKATAKRLPQYYRLFKSLVEENVTRTNSQLISEKIGVDAATIRRDFSLFGELGRRGYGYETKVLRDFFGELLGQDQETHIALIGVGNLGRALLHYQFQDRNKMRITQAYDISGNPLVGTQTDDGIPIYNISDLEKNVKKSDIKTAILSVRKENAQEVVDTLVKAGIKGFLNFAPIRLKVPSDVVVQSIDLTKELQTLLFFMGAQEE</sequence>
<accession>Q8GDC4</accession>
<comment type="function">
    <text evidence="1">Modulates transcription in response to changes in cellular NADH/NAD(+) redox state.</text>
</comment>
<comment type="subunit">
    <text evidence="1">Homodimer.</text>
</comment>
<comment type="subcellular location">
    <subcellularLocation>
        <location evidence="1">Cytoplasm</location>
    </subcellularLocation>
</comment>
<comment type="similarity">
    <text evidence="1">Belongs to the transcriptional regulatory Rex family.</text>
</comment>
<feature type="chain" id="PRO_0000097894" description="Redox-sensing transcriptional repressor Rex">
    <location>
        <begin position="1"/>
        <end position="216"/>
    </location>
</feature>
<feature type="DNA-binding region" description="H-T-H motif" evidence="1">
    <location>
        <begin position="20"/>
        <end position="59"/>
    </location>
</feature>
<feature type="binding site" evidence="1">
    <location>
        <begin position="94"/>
        <end position="99"/>
    </location>
    <ligand>
        <name>NAD(+)</name>
        <dbReference type="ChEBI" id="CHEBI:57540"/>
    </ligand>
</feature>
<name>REX_LACLC</name>
<keyword id="KW-0963">Cytoplasm</keyword>
<keyword id="KW-0238">DNA-binding</keyword>
<keyword id="KW-0520">NAD</keyword>
<keyword id="KW-0678">Repressor</keyword>
<keyword id="KW-0804">Transcription</keyword>
<keyword id="KW-0805">Transcription regulation</keyword>
<organism>
    <name type="scientific">Lactococcus lactis subsp. cremoris</name>
    <name type="common">Streptococcus cremoris</name>
    <dbReference type="NCBI Taxonomy" id="1359"/>
    <lineage>
        <taxon>Bacteria</taxon>
        <taxon>Bacillati</taxon>
        <taxon>Bacillota</taxon>
        <taxon>Bacilli</taxon>
        <taxon>Lactobacillales</taxon>
        <taxon>Streptococcaceae</taxon>
        <taxon>Lactococcus</taxon>
    </lineage>
</organism>
<evidence type="ECO:0000255" key="1">
    <source>
        <dbReference type="HAMAP-Rule" id="MF_01131"/>
    </source>
</evidence>